<keyword id="KW-0963">Cytoplasm</keyword>
<keyword id="KW-0378">Hydrolase</keyword>
<evidence type="ECO:0000255" key="1">
    <source>
        <dbReference type="HAMAP-Rule" id="MF_01954"/>
    </source>
</evidence>
<accession>A4JC43</accession>
<sequence>MIPGEILTDDGEHELNAGRATRSLVVANTGDRPVQVGSHYHFFEVNDALSFDRAAARGFRLNIAAGTAVRFEPGQTRTVELVELAGDRAVYGFQGKVMGPL</sequence>
<name>URE2_BURVG</name>
<gene>
    <name evidence="1" type="primary">ureB</name>
    <name type="ordered locus">Bcep1808_0834</name>
</gene>
<proteinExistence type="inferred from homology"/>
<protein>
    <recommendedName>
        <fullName evidence="1">Urease subunit beta</fullName>
        <ecNumber evidence="1">3.5.1.5</ecNumber>
    </recommendedName>
    <alternativeName>
        <fullName evidence="1">Urea amidohydrolase subunit beta</fullName>
    </alternativeName>
</protein>
<organism>
    <name type="scientific">Burkholderia vietnamiensis (strain G4 / LMG 22486)</name>
    <name type="common">Burkholderia cepacia (strain R1808)</name>
    <dbReference type="NCBI Taxonomy" id="269482"/>
    <lineage>
        <taxon>Bacteria</taxon>
        <taxon>Pseudomonadati</taxon>
        <taxon>Pseudomonadota</taxon>
        <taxon>Betaproteobacteria</taxon>
        <taxon>Burkholderiales</taxon>
        <taxon>Burkholderiaceae</taxon>
        <taxon>Burkholderia</taxon>
        <taxon>Burkholderia cepacia complex</taxon>
    </lineage>
</organism>
<feature type="chain" id="PRO_1000070727" description="Urease subunit beta">
    <location>
        <begin position="1"/>
        <end position="101"/>
    </location>
</feature>
<reference key="1">
    <citation type="submission" date="2007-03" db="EMBL/GenBank/DDBJ databases">
        <title>Complete sequence of chromosome 1 of Burkholderia vietnamiensis G4.</title>
        <authorList>
            <consortium name="US DOE Joint Genome Institute"/>
            <person name="Copeland A."/>
            <person name="Lucas S."/>
            <person name="Lapidus A."/>
            <person name="Barry K."/>
            <person name="Detter J.C."/>
            <person name="Glavina del Rio T."/>
            <person name="Hammon N."/>
            <person name="Israni S."/>
            <person name="Dalin E."/>
            <person name="Tice H."/>
            <person name="Pitluck S."/>
            <person name="Chain P."/>
            <person name="Malfatti S."/>
            <person name="Shin M."/>
            <person name="Vergez L."/>
            <person name="Schmutz J."/>
            <person name="Larimer F."/>
            <person name="Land M."/>
            <person name="Hauser L."/>
            <person name="Kyrpides N."/>
            <person name="Tiedje J."/>
            <person name="Richardson P."/>
        </authorList>
    </citation>
    <scope>NUCLEOTIDE SEQUENCE [LARGE SCALE GENOMIC DNA]</scope>
    <source>
        <strain>G4 / LMG 22486</strain>
    </source>
</reference>
<dbReference type="EC" id="3.5.1.5" evidence="1"/>
<dbReference type="EMBL" id="CP000614">
    <property type="protein sequence ID" value="ABO53846.1"/>
    <property type="molecule type" value="Genomic_DNA"/>
</dbReference>
<dbReference type="SMR" id="A4JC43"/>
<dbReference type="KEGG" id="bvi:Bcep1808_0834"/>
<dbReference type="eggNOG" id="COG0832">
    <property type="taxonomic scope" value="Bacteria"/>
</dbReference>
<dbReference type="HOGENOM" id="CLU_129707_1_1_4"/>
<dbReference type="UniPathway" id="UPA00258">
    <property type="reaction ID" value="UER00370"/>
</dbReference>
<dbReference type="Proteomes" id="UP000002287">
    <property type="component" value="Chromosome 1"/>
</dbReference>
<dbReference type="GO" id="GO:0035550">
    <property type="term" value="C:urease complex"/>
    <property type="evidence" value="ECO:0007669"/>
    <property type="project" value="InterPro"/>
</dbReference>
<dbReference type="GO" id="GO:0009039">
    <property type="term" value="F:urease activity"/>
    <property type="evidence" value="ECO:0007669"/>
    <property type="project" value="UniProtKB-UniRule"/>
</dbReference>
<dbReference type="GO" id="GO:0043419">
    <property type="term" value="P:urea catabolic process"/>
    <property type="evidence" value="ECO:0007669"/>
    <property type="project" value="UniProtKB-UniRule"/>
</dbReference>
<dbReference type="CDD" id="cd00407">
    <property type="entry name" value="Urease_beta"/>
    <property type="match status" value="1"/>
</dbReference>
<dbReference type="FunFam" id="2.10.150.10:FF:000001">
    <property type="entry name" value="Urease subunit beta"/>
    <property type="match status" value="1"/>
</dbReference>
<dbReference type="Gene3D" id="2.10.150.10">
    <property type="entry name" value="Urease, beta subunit"/>
    <property type="match status" value="1"/>
</dbReference>
<dbReference type="HAMAP" id="MF_01954">
    <property type="entry name" value="Urease_beta"/>
    <property type="match status" value="1"/>
</dbReference>
<dbReference type="InterPro" id="IPR002019">
    <property type="entry name" value="Urease_beta-like"/>
</dbReference>
<dbReference type="InterPro" id="IPR036461">
    <property type="entry name" value="Urease_betasu_sf"/>
</dbReference>
<dbReference type="InterPro" id="IPR050069">
    <property type="entry name" value="Urease_subunit"/>
</dbReference>
<dbReference type="NCBIfam" id="NF009682">
    <property type="entry name" value="PRK13203.1"/>
    <property type="match status" value="1"/>
</dbReference>
<dbReference type="NCBIfam" id="TIGR00192">
    <property type="entry name" value="urease_beta"/>
    <property type="match status" value="1"/>
</dbReference>
<dbReference type="PANTHER" id="PTHR33569">
    <property type="entry name" value="UREASE"/>
    <property type="match status" value="1"/>
</dbReference>
<dbReference type="PANTHER" id="PTHR33569:SF1">
    <property type="entry name" value="UREASE"/>
    <property type="match status" value="1"/>
</dbReference>
<dbReference type="Pfam" id="PF00699">
    <property type="entry name" value="Urease_beta"/>
    <property type="match status" value="1"/>
</dbReference>
<dbReference type="SUPFAM" id="SSF51278">
    <property type="entry name" value="Urease, beta-subunit"/>
    <property type="match status" value="1"/>
</dbReference>
<comment type="catalytic activity">
    <reaction evidence="1">
        <text>urea + 2 H2O + H(+) = hydrogencarbonate + 2 NH4(+)</text>
        <dbReference type="Rhea" id="RHEA:20557"/>
        <dbReference type="ChEBI" id="CHEBI:15377"/>
        <dbReference type="ChEBI" id="CHEBI:15378"/>
        <dbReference type="ChEBI" id="CHEBI:16199"/>
        <dbReference type="ChEBI" id="CHEBI:17544"/>
        <dbReference type="ChEBI" id="CHEBI:28938"/>
        <dbReference type="EC" id="3.5.1.5"/>
    </reaction>
</comment>
<comment type="pathway">
    <text evidence="1">Nitrogen metabolism; urea degradation; CO(2) and NH(3) from urea (urease route): step 1/1.</text>
</comment>
<comment type="subunit">
    <text evidence="1">Heterotrimer of UreA (gamma), UreB (beta) and UreC (alpha) subunits. Three heterotrimers associate to form the active enzyme.</text>
</comment>
<comment type="subcellular location">
    <subcellularLocation>
        <location evidence="1">Cytoplasm</location>
    </subcellularLocation>
</comment>
<comment type="similarity">
    <text evidence="1">Belongs to the urease beta subunit family.</text>
</comment>